<gene>
    <name evidence="1" type="primary">mntP</name>
    <name type="synonym">yebN</name>
    <name type="ordered locus">SeD_A1481</name>
</gene>
<name>MNTP_SALDC</name>
<protein>
    <recommendedName>
        <fullName evidence="1">Probable manganese efflux pump MntP</fullName>
    </recommendedName>
</protein>
<evidence type="ECO:0000255" key="1">
    <source>
        <dbReference type="HAMAP-Rule" id="MF_01521"/>
    </source>
</evidence>
<organism>
    <name type="scientific">Salmonella dublin (strain CT_02021853)</name>
    <dbReference type="NCBI Taxonomy" id="439851"/>
    <lineage>
        <taxon>Bacteria</taxon>
        <taxon>Pseudomonadati</taxon>
        <taxon>Pseudomonadota</taxon>
        <taxon>Gammaproteobacteria</taxon>
        <taxon>Enterobacterales</taxon>
        <taxon>Enterobacteriaceae</taxon>
        <taxon>Salmonella</taxon>
    </lineage>
</organism>
<accession>B5FTJ9</accession>
<proteinExistence type="inferred from homology"/>
<comment type="function">
    <text evidence="1">Probably functions as a manganese efflux pump.</text>
</comment>
<comment type="subcellular location">
    <subcellularLocation>
        <location evidence="1">Cell inner membrane</location>
        <topology evidence="1">Multi-pass membrane protein</topology>
    </subcellularLocation>
</comment>
<comment type="similarity">
    <text evidence="1">Belongs to the MntP (TC 9.B.29) family.</text>
</comment>
<reference key="1">
    <citation type="journal article" date="2011" name="J. Bacteriol.">
        <title>Comparative genomics of 28 Salmonella enterica isolates: evidence for CRISPR-mediated adaptive sublineage evolution.</title>
        <authorList>
            <person name="Fricke W.F."/>
            <person name="Mammel M.K."/>
            <person name="McDermott P.F."/>
            <person name="Tartera C."/>
            <person name="White D.G."/>
            <person name="Leclerc J.E."/>
            <person name="Ravel J."/>
            <person name="Cebula T.A."/>
        </authorList>
    </citation>
    <scope>NUCLEOTIDE SEQUENCE [LARGE SCALE GENOMIC DNA]</scope>
    <source>
        <strain>CT_02021853</strain>
    </source>
</reference>
<feature type="chain" id="PRO_1000200038" description="Probable manganese efflux pump MntP">
    <location>
        <begin position="1"/>
        <end position="188"/>
    </location>
</feature>
<feature type="transmembrane region" description="Helical" evidence="1">
    <location>
        <begin position="3"/>
        <end position="23"/>
    </location>
</feature>
<feature type="transmembrane region" description="Helical" evidence="1">
    <location>
        <begin position="41"/>
        <end position="61"/>
    </location>
</feature>
<feature type="transmembrane region" description="Helical" evidence="1">
    <location>
        <begin position="66"/>
        <end position="86"/>
    </location>
</feature>
<feature type="transmembrane region" description="Helical" evidence="1">
    <location>
        <begin position="106"/>
        <end position="128"/>
    </location>
</feature>
<feature type="transmembrane region" description="Helical" evidence="1">
    <location>
        <begin position="143"/>
        <end position="163"/>
    </location>
</feature>
<feature type="transmembrane region" description="Helical" evidence="1">
    <location>
        <begin position="168"/>
        <end position="188"/>
    </location>
</feature>
<sequence>MHFTATVLLAFGMSMDAFAASIGKGATLHKPKFSEALRTGLIFGAVETLTPLIGWGLGILASKFVLEWNHWIAFVLLIFLGGRMIIEGIRGGSDEDETPLRRHSFWLLVTTAIATSLDAMAVGVGLAFLQVNIIATALAIGCATLIMSTLGMMIGRFIGPMLGKRAEILGGVVLIGIGVQILWTHFHG</sequence>
<keyword id="KW-0997">Cell inner membrane</keyword>
<keyword id="KW-1003">Cell membrane</keyword>
<keyword id="KW-0406">Ion transport</keyword>
<keyword id="KW-0464">Manganese</keyword>
<keyword id="KW-0472">Membrane</keyword>
<keyword id="KW-0812">Transmembrane</keyword>
<keyword id="KW-1133">Transmembrane helix</keyword>
<keyword id="KW-0813">Transport</keyword>
<dbReference type="EMBL" id="CP001144">
    <property type="protein sequence ID" value="ACH73903.1"/>
    <property type="molecule type" value="Genomic_DNA"/>
</dbReference>
<dbReference type="RefSeq" id="WP_001518359.1">
    <property type="nucleotide sequence ID" value="NC_011205.1"/>
</dbReference>
<dbReference type="KEGG" id="sed:SeD_A1481"/>
<dbReference type="HOGENOM" id="CLU_096410_0_0_6"/>
<dbReference type="Proteomes" id="UP000008322">
    <property type="component" value="Chromosome"/>
</dbReference>
<dbReference type="GO" id="GO:0005886">
    <property type="term" value="C:plasma membrane"/>
    <property type="evidence" value="ECO:0007669"/>
    <property type="project" value="UniProtKB-SubCell"/>
</dbReference>
<dbReference type="GO" id="GO:0005384">
    <property type="term" value="F:manganese ion transmembrane transporter activity"/>
    <property type="evidence" value="ECO:0007669"/>
    <property type="project" value="UniProtKB-UniRule"/>
</dbReference>
<dbReference type="HAMAP" id="MF_01521">
    <property type="entry name" value="MntP_pump"/>
    <property type="match status" value="1"/>
</dbReference>
<dbReference type="InterPro" id="IPR003810">
    <property type="entry name" value="Mntp/YtaF"/>
</dbReference>
<dbReference type="InterPro" id="IPR022929">
    <property type="entry name" value="Put_MntP"/>
</dbReference>
<dbReference type="NCBIfam" id="NF008546">
    <property type="entry name" value="PRK11469.1"/>
    <property type="match status" value="1"/>
</dbReference>
<dbReference type="PANTHER" id="PTHR35529">
    <property type="entry name" value="MANGANESE EFFLUX PUMP MNTP-RELATED"/>
    <property type="match status" value="1"/>
</dbReference>
<dbReference type="PANTHER" id="PTHR35529:SF1">
    <property type="entry name" value="MANGANESE EFFLUX PUMP MNTP-RELATED"/>
    <property type="match status" value="1"/>
</dbReference>
<dbReference type="Pfam" id="PF02659">
    <property type="entry name" value="Mntp"/>
    <property type="match status" value="1"/>
</dbReference>